<keyword id="KW-1003">Cell membrane</keyword>
<keyword id="KW-0472">Membrane</keyword>
<keyword id="KW-0812">Transmembrane</keyword>
<keyword id="KW-1133">Transmembrane helix</keyword>
<comment type="subcellular location">
    <subcellularLocation>
        <location evidence="3">Cell membrane</location>
        <topology evidence="3">Multi-pass membrane protein</topology>
    </subcellularLocation>
</comment>
<comment type="similarity">
    <text evidence="3">Belongs to the chlamydial CPn_0443/CT_005/TC_0273 family.</text>
</comment>
<proteinExistence type="inferred from homology"/>
<accession>Q9Z8A0</accession>
<accession>Q9JRY2</accession>
<reference key="1">
    <citation type="journal article" date="1999" name="Nat. Genet.">
        <title>Comparative genomes of Chlamydia pneumoniae and C. trachomatis.</title>
        <authorList>
            <person name="Kalman S."/>
            <person name="Mitchell W.P."/>
            <person name="Marathe R."/>
            <person name="Lammel C.J."/>
            <person name="Fan J."/>
            <person name="Hyman R.W."/>
            <person name="Olinger L."/>
            <person name="Grimwood J."/>
            <person name="Davis R.W."/>
            <person name="Stephens R.S."/>
        </authorList>
    </citation>
    <scope>NUCLEOTIDE SEQUENCE [LARGE SCALE GENOMIC DNA]</scope>
    <source>
        <strain>CWL029</strain>
    </source>
</reference>
<reference key="2">
    <citation type="journal article" date="2000" name="Nucleic Acids Res.">
        <title>Genome sequences of Chlamydia trachomatis MoPn and Chlamydia pneumoniae AR39.</title>
        <authorList>
            <person name="Read T.D."/>
            <person name="Brunham R.C."/>
            <person name="Shen C."/>
            <person name="Gill S.R."/>
            <person name="Heidelberg J.F."/>
            <person name="White O."/>
            <person name="Hickey E.K."/>
            <person name="Peterson J.D."/>
            <person name="Utterback T.R."/>
            <person name="Berry K.J."/>
            <person name="Bass S."/>
            <person name="Linher K.D."/>
            <person name="Weidman J.F."/>
            <person name="Khouri H.M."/>
            <person name="Craven B."/>
            <person name="Bowman C."/>
            <person name="Dodson R.J."/>
            <person name="Gwinn M.L."/>
            <person name="Nelson W.C."/>
            <person name="DeBoy R.T."/>
            <person name="Kolonay J.F."/>
            <person name="McClarty G."/>
            <person name="Salzberg S.L."/>
            <person name="Eisen J.A."/>
            <person name="Fraser C.M."/>
        </authorList>
    </citation>
    <scope>NUCLEOTIDE SEQUENCE [LARGE SCALE GENOMIC DNA]</scope>
    <source>
        <strain>AR39</strain>
    </source>
</reference>
<reference key="3">
    <citation type="journal article" date="2000" name="Nucleic Acids Res.">
        <title>Comparison of whole genome sequences of Chlamydia pneumoniae J138 from Japan and CWL029 from USA.</title>
        <authorList>
            <person name="Shirai M."/>
            <person name="Hirakawa H."/>
            <person name="Kimoto M."/>
            <person name="Tabuchi M."/>
            <person name="Kishi F."/>
            <person name="Ouchi K."/>
            <person name="Shiba T."/>
            <person name="Ishii K."/>
            <person name="Hattori M."/>
            <person name="Kuhara S."/>
            <person name="Nakazawa T."/>
        </authorList>
    </citation>
    <scope>NUCLEOTIDE SEQUENCE [LARGE SCALE GENOMIC DNA]</scope>
    <source>
        <strain>J138</strain>
    </source>
</reference>
<reference key="4">
    <citation type="submission" date="2002-05" db="EMBL/GenBank/DDBJ databases">
        <title>The genome sequence of Chlamydia pneumoniae TW183 and comparison with other Chlamydia strains based on whole genome sequence analysis.</title>
        <authorList>
            <person name="Geng M.M."/>
            <person name="Schuhmacher A."/>
            <person name="Muehldorfer I."/>
            <person name="Bensch K.W."/>
            <person name="Schaefer K.P."/>
            <person name="Schneider S."/>
            <person name="Pohl T."/>
            <person name="Essig A."/>
            <person name="Marre R."/>
            <person name="Melchers K."/>
        </authorList>
    </citation>
    <scope>NUCLEOTIDE SEQUENCE [LARGE SCALE GENOMIC DNA]</scope>
    <source>
        <strain>TW-183</strain>
    </source>
</reference>
<dbReference type="EMBL" id="AE001363">
    <property type="protein sequence ID" value="AAD18587.1"/>
    <property type="molecule type" value="Genomic_DNA"/>
</dbReference>
<dbReference type="EMBL" id="AE002161">
    <property type="protein sequence ID" value="AAF38167.1"/>
    <property type="molecule type" value="Genomic_DNA"/>
</dbReference>
<dbReference type="EMBL" id="BA000008">
    <property type="protein sequence ID" value="BAA98651.1"/>
    <property type="molecule type" value="Genomic_DNA"/>
</dbReference>
<dbReference type="EMBL" id="AE009440">
    <property type="protein sequence ID" value="AAP98390.1"/>
    <property type="molecule type" value="Genomic_DNA"/>
</dbReference>
<dbReference type="PIR" id="A72078">
    <property type="entry name" value="A72078"/>
</dbReference>
<dbReference type="PIR" id="A86546">
    <property type="entry name" value="A86546"/>
</dbReference>
<dbReference type="PIR" id="B81590">
    <property type="entry name" value="B81590"/>
</dbReference>
<dbReference type="RefSeq" id="NP_224643.1">
    <property type="nucleotide sequence ID" value="NC_000922.1"/>
</dbReference>
<dbReference type="RefSeq" id="WP_010883086.1">
    <property type="nucleotide sequence ID" value="NZ_LN847257.1"/>
</dbReference>
<dbReference type="RefSeq" id="WP_010892031.1">
    <property type="nucleotide sequence ID" value="NZ_LN846995.1"/>
</dbReference>
<dbReference type="STRING" id="406984.CPK_ORF00955"/>
<dbReference type="GeneID" id="45050490"/>
<dbReference type="KEGG" id="cpa:CP_0310"/>
<dbReference type="KEGG" id="cpj:CPj0443"/>
<dbReference type="KEGG" id="cpn:CPn_0443"/>
<dbReference type="KEGG" id="cpt:CpB0459"/>
<dbReference type="PATRIC" id="fig|115713.3.peg.490"/>
<dbReference type="HOGENOM" id="CLU_060909_0_0_0"/>
<dbReference type="OrthoDB" id="18792at2"/>
<dbReference type="Proteomes" id="UP000000583">
    <property type="component" value="Chromosome"/>
</dbReference>
<dbReference type="Proteomes" id="UP000000801">
    <property type="component" value="Chromosome"/>
</dbReference>
<dbReference type="GO" id="GO:0005886">
    <property type="term" value="C:plasma membrane"/>
    <property type="evidence" value="ECO:0007669"/>
    <property type="project" value="UniProtKB-SubCell"/>
</dbReference>
<dbReference type="InterPro" id="IPR035355">
    <property type="entry name" value="DUF5423"/>
</dbReference>
<dbReference type="InterPro" id="IPR036259">
    <property type="entry name" value="MFS_trans_sf"/>
</dbReference>
<dbReference type="Pfam" id="PF17461">
    <property type="entry name" value="DUF5423"/>
    <property type="match status" value="1"/>
</dbReference>
<dbReference type="SUPFAM" id="SSF103473">
    <property type="entry name" value="MFS general substrate transporter"/>
    <property type="match status" value="1"/>
</dbReference>
<organism>
    <name type="scientific">Chlamydia pneumoniae</name>
    <name type="common">Chlamydophila pneumoniae</name>
    <dbReference type="NCBI Taxonomy" id="83558"/>
    <lineage>
        <taxon>Bacteria</taxon>
        <taxon>Pseudomonadati</taxon>
        <taxon>Chlamydiota</taxon>
        <taxon>Chlamydiia</taxon>
        <taxon>Chlamydiales</taxon>
        <taxon>Chlamydiaceae</taxon>
        <taxon>Chlamydia/Chlamydophila group</taxon>
        <taxon>Chlamydia</taxon>
    </lineage>
</organism>
<evidence type="ECO:0000255" key="1"/>
<evidence type="ECO:0000256" key="2">
    <source>
        <dbReference type="SAM" id="MobiDB-lite"/>
    </source>
</evidence>
<evidence type="ECO:0000305" key="3"/>
<protein>
    <recommendedName>
        <fullName>Uncharacterized protein CPn_0443/CP_0310/CPj0443/CpB0459</fullName>
    </recommendedName>
</protein>
<gene>
    <name type="ordered locus">CPn_0443</name>
    <name type="ordered locus">CP_0310</name>
    <name type="ordered locus">CPj0443</name>
    <name type="ordered locus">CpB0459</name>
</gene>
<name>Y443_CHLPN</name>
<sequence length="417" mass="45557">MSQPPINPLGQPQVPAAASPSGQPSVVKRLKTSSTGLFKRFITVPDKYPKMRYVYDTGIIALAAIAILSILLTASGNSLMLYALAPALALGALGVTLLISDILDSPKAKKIGEAITAIVVPIIVLAIAAGLIAGAFVASSGTMLVFANPMFVMGLITVGLYFMSLNKLTLDYFRREHLLRMEKKTQETAEPILVTPSADDAKKIAVEKKKDLSASARMEEHEASQRQDARHRRIGREAQGSFFYSSRNPEHRRSFGSLSRFKTKPSDAASTRPASISPPFKDDFQPYHFKDLRSSSFGSGASSAFTPIMPASSRSPNFSTGTVLHPEPVYPKGGKEPSIPRVSSSSRRSPRDRQDKQQQQQNQDEEQKQQSKKKSGKSNQSLKTPPPDGKSTANLSPSNPFSDGYDEREKRKHRKNK</sequence>
<feature type="chain" id="PRO_0000218386" description="Uncharacterized protein CPn_0443/CP_0310/CPj0443/CpB0459">
    <location>
        <begin position="1"/>
        <end position="417"/>
    </location>
</feature>
<feature type="transmembrane region" description="Helical" evidence="1">
    <location>
        <begin position="54"/>
        <end position="74"/>
    </location>
</feature>
<feature type="transmembrane region" description="Helical" evidence="1">
    <location>
        <begin position="79"/>
        <end position="99"/>
    </location>
</feature>
<feature type="transmembrane region" description="Helical" evidence="1">
    <location>
        <begin position="117"/>
        <end position="137"/>
    </location>
</feature>
<feature type="transmembrane region" description="Helical" evidence="1">
    <location>
        <begin position="143"/>
        <end position="163"/>
    </location>
</feature>
<feature type="region of interest" description="Disordered" evidence="2">
    <location>
        <begin position="1"/>
        <end position="24"/>
    </location>
</feature>
<feature type="region of interest" description="Disordered" evidence="2">
    <location>
        <begin position="211"/>
        <end position="283"/>
    </location>
</feature>
<feature type="region of interest" description="Disordered" evidence="2">
    <location>
        <begin position="308"/>
        <end position="417"/>
    </location>
</feature>
<feature type="compositionally biased region" description="Basic and acidic residues" evidence="2">
    <location>
        <begin position="211"/>
        <end position="228"/>
    </location>
</feature>
<feature type="compositionally biased region" description="Polar residues" evidence="2">
    <location>
        <begin position="312"/>
        <end position="322"/>
    </location>
</feature>
<feature type="compositionally biased region" description="Low complexity" evidence="2">
    <location>
        <begin position="336"/>
        <end position="347"/>
    </location>
</feature>
<feature type="compositionally biased region" description="Polar residues" evidence="2">
    <location>
        <begin position="391"/>
        <end position="401"/>
    </location>
</feature>
<feature type="sequence conflict" description="In Ref. 1; AAD18587." evidence="3" ref="1">
    <original>V</original>
    <variation>I</variation>
    <location>
        <position position="44"/>
    </location>
</feature>
<feature type="sequence conflict" description="In Ref. 4; AAP98390." evidence="3" ref="4">
    <original>M</original>
    <variation>V</variation>
    <location>
        <position position="80"/>
    </location>
</feature>